<comment type="function">
    <text evidence="1">A translational regulator that binds mRNA to regulate translation initiation and/or mRNA stability. Usually binds in the 5'-UTR at or near the Shine-Dalgarno sequence preventing ribosome-binding, thus repressing translation. Its main target seems to be the major flagellin gene, while its function is anatagonized by FliW.</text>
</comment>
<comment type="subunit">
    <text evidence="1">Homodimer; the beta-strands of each monomer intercalate to form a hydrophobic core, while the alpha-helices form wings that extend away from the core.</text>
</comment>
<comment type="subcellular location">
    <subcellularLocation>
        <location evidence="1">Cytoplasm</location>
    </subcellularLocation>
</comment>
<comment type="similarity">
    <text evidence="1">Belongs to the CsrA/RsmA family.</text>
</comment>
<feature type="chain" id="PRO_1000097486" description="Translational regulator CsrA">
    <location>
        <begin position="1"/>
        <end position="72"/>
    </location>
</feature>
<evidence type="ECO:0000255" key="1">
    <source>
        <dbReference type="HAMAP-Rule" id="MF_00167"/>
    </source>
</evidence>
<keyword id="KW-1005">Bacterial flagellum biogenesis</keyword>
<keyword id="KW-0963">Cytoplasm</keyword>
<keyword id="KW-0678">Repressor</keyword>
<keyword id="KW-0694">RNA-binding</keyword>
<keyword id="KW-0810">Translation regulation</keyword>
<protein>
    <recommendedName>
        <fullName evidence="1">Translational regulator CsrA</fullName>
    </recommendedName>
</protein>
<reference key="1">
    <citation type="journal article" date="2007" name="PLoS ONE">
        <title>Analysis of the neurotoxin complex genes in Clostridium botulinum A1-A4 and B1 strains: BoNT/A3, /Ba4 and /B1 clusters are located within plasmids.</title>
        <authorList>
            <person name="Smith T.J."/>
            <person name="Hill K.K."/>
            <person name="Foley B.T."/>
            <person name="Detter J.C."/>
            <person name="Munk A.C."/>
            <person name="Bruce D.C."/>
            <person name="Doggett N.A."/>
            <person name="Smith L.A."/>
            <person name="Marks J.D."/>
            <person name="Xie G."/>
            <person name="Brettin T.S."/>
        </authorList>
    </citation>
    <scope>NUCLEOTIDE SEQUENCE [LARGE SCALE GENOMIC DNA]</scope>
    <source>
        <strain>Okra / Type B1</strain>
    </source>
</reference>
<sequence length="72" mass="8096">MLVITRKKGESLLIGDDIEVTVVKLDDGSVKLAIDAPKKLTILRKELYNEVQEENKKATNFNPSILKNIKSK</sequence>
<proteinExistence type="inferred from homology"/>
<accession>B1IK65</accession>
<dbReference type="EMBL" id="CP000939">
    <property type="protein sequence ID" value="ACA45951.1"/>
    <property type="molecule type" value="Genomic_DNA"/>
</dbReference>
<dbReference type="RefSeq" id="WP_015957982.1">
    <property type="nucleotide sequence ID" value="NC_010516.1"/>
</dbReference>
<dbReference type="SMR" id="B1IK65"/>
<dbReference type="KEGG" id="cbb:CLD_1837"/>
<dbReference type="HOGENOM" id="CLU_164837_0_1_9"/>
<dbReference type="Proteomes" id="UP000008541">
    <property type="component" value="Chromosome"/>
</dbReference>
<dbReference type="GO" id="GO:0005829">
    <property type="term" value="C:cytosol"/>
    <property type="evidence" value="ECO:0007669"/>
    <property type="project" value="TreeGrafter"/>
</dbReference>
<dbReference type="GO" id="GO:0048027">
    <property type="term" value="F:mRNA 5'-UTR binding"/>
    <property type="evidence" value="ECO:0007669"/>
    <property type="project" value="UniProtKB-UniRule"/>
</dbReference>
<dbReference type="GO" id="GO:0044781">
    <property type="term" value="P:bacterial-type flagellum organization"/>
    <property type="evidence" value="ECO:0007669"/>
    <property type="project" value="UniProtKB-KW"/>
</dbReference>
<dbReference type="GO" id="GO:0006402">
    <property type="term" value="P:mRNA catabolic process"/>
    <property type="evidence" value="ECO:0007669"/>
    <property type="project" value="InterPro"/>
</dbReference>
<dbReference type="GO" id="GO:0045947">
    <property type="term" value="P:negative regulation of translational initiation"/>
    <property type="evidence" value="ECO:0007669"/>
    <property type="project" value="UniProtKB-UniRule"/>
</dbReference>
<dbReference type="GO" id="GO:1902208">
    <property type="term" value="P:regulation of bacterial-type flagellum assembly"/>
    <property type="evidence" value="ECO:0007669"/>
    <property type="project" value="UniProtKB-UniRule"/>
</dbReference>
<dbReference type="GO" id="GO:0006109">
    <property type="term" value="P:regulation of carbohydrate metabolic process"/>
    <property type="evidence" value="ECO:0007669"/>
    <property type="project" value="InterPro"/>
</dbReference>
<dbReference type="FunFam" id="2.60.40.4380:FF:000002">
    <property type="entry name" value="Translational regulator CsrA"/>
    <property type="match status" value="1"/>
</dbReference>
<dbReference type="Gene3D" id="2.60.40.4380">
    <property type="entry name" value="Translational regulator CsrA"/>
    <property type="match status" value="1"/>
</dbReference>
<dbReference type="HAMAP" id="MF_00167">
    <property type="entry name" value="CsrA"/>
    <property type="match status" value="1"/>
</dbReference>
<dbReference type="InterPro" id="IPR003751">
    <property type="entry name" value="CsrA"/>
</dbReference>
<dbReference type="InterPro" id="IPR036107">
    <property type="entry name" value="CsrA_sf"/>
</dbReference>
<dbReference type="NCBIfam" id="TIGR00202">
    <property type="entry name" value="csrA"/>
    <property type="match status" value="1"/>
</dbReference>
<dbReference type="NCBIfam" id="NF002469">
    <property type="entry name" value="PRK01712.1"/>
    <property type="match status" value="1"/>
</dbReference>
<dbReference type="PANTHER" id="PTHR34984">
    <property type="entry name" value="CARBON STORAGE REGULATOR"/>
    <property type="match status" value="1"/>
</dbReference>
<dbReference type="PANTHER" id="PTHR34984:SF1">
    <property type="entry name" value="CARBON STORAGE REGULATOR"/>
    <property type="match status" value="1"/>
</dbReference>
<dbReference type="Pfam" id="PF02599">
    <property type="entry name" value="CsrA"/>
    <property type="match status" value="1"/>
</dbReference>
<dbReference type="SUPFAM" id="SSF117130">
    <property type="entry name" value="CsrA-like"/>
    <property type="match status" value="1"/>
</dbReference>
<organism>
    <name type="scientific">Clostridium botulinum (strain Okra / Type B1)</name>
    <dbReference type="NCBI Taxonomy" id="498213"/>
    <lineage>
        <taxon>Bacteria</taxon>
        <taxon>Bacillati</taxon>
        <taxon>Bacillota</taxon>
        <taxon>Clostridia</taxon>
        <taxon>Eubacteriales</taxon>
        <taxon>Clostridiaceae</taxon>
        <taxon>Clostridium</taxon>
    </lineage>
</organism>
<gene>
    <name evidence="1" type="primary">csrA</name>
    <name type="ordered locus">CLD_1837</name>
</gene>
<name>CSRA_CLOBK</name>